<dbReference type="EMBL" id="CR767821">
    <property type="protein sequence ID" value="CAH58455.1"/>
    <property type="molecule type" value="Genomic_DNA"/>
</dbReference>
<dbReference type="EMBL" id="CR925678">
    <property type="protein sequence ID" value="CAI27255.1"/>
    <property type="molecule type" value="Genomic_DNA"/>
</dbReference>
<dbReference type="RefSeq" id="WP_011155401.1">
    <property type="nucleotide sequence ID" value="NC_005295.2"/>
</dbReference>
<dbReference type="SMR" id="Q5HAF9"/>
<dbReference type="GeneID" id="33058276"/>
<dbReference type="KEGG" id="eru:Erum7230"/>
<dbReference type="KEGG" id="erw:ERWE_CDS_07610"/>
<dbReference type="eggNOG" id="COG0233">
    <property type="taxonomic scope" value="Bacteria"/>
</dbReference>
<dbReference type="HOGENOM" id="CLU_073981_2_1_5"/>
<dbReference type="Proteomes" id="UP000001021">
    <property type="component" value="Chromosome"/>
</dbReference>
<dbReference type="GO" id="GO:0005737">
    <property type="term" value="C:cytoplasm"/>
    <property type="evidence" value="ECO:0007669"/>
    <property type="project" value="UniProtKB-SubCell"/>
</dbReference>
<dbReference type="GO" id="GO:0043023">
    <property type="term" value="F:ribosomal large subunit binding"/>
    <property type="evidence" value="ECO:0007669"/>
    <property type="project" value="TreeGrafter"/>
</dbReference>
<dbReference type="GO" id="GO:0006415">
    <property type="term" value="P:translational termination"/>
    <property type="evidence" value="ECO:0007669"/>
    <property type="project" value="UniProtKB-UniRule"/>
</dbReference>
<dbReference type="CDD" id="cd00520">
    <property type="entry name" value="RRF"/>
    <property type="match status" value="1"/>
</dbReference>
<dbReference type="FunFam" id="1.10.132.20:FF:000001">
    <property type="entry name" value="Ribosome-recycling factor"/>
    <property type="match status" value="1"/>
</dbReference>
<dbReference type="FunFam" id="3.30.1360.40:FF:000001">
    <property type="entry name" value="Ribosome-recycling factor"/>
    <property type="match status" value="1"/>
</dbReference>
<dbReference type="Gene3D" id="3.30.1360.40">
    <property type="match status" value="1"/>
</dbReference>
<dbReference type="Gene3D" id="1.10.132.20">
    <property type="entry name" value="Ribosome-recycling factor"/>
    <property type="match status" value="1"/>
</dbReference>
<dbReference type="HAMAP" id="MF_00040">
    <property type="entry name" value="RRF"/>
    <property type="match status" value="1"/>
</dbReference>
<dbReference type="InterPro" id="IPR002661">
    <property type="entry name" value="Ribosome_recyc_fac"/>
</dbReference>
<dbReference type="InterPro" id="IPR023584">
    <property type="entry name" value="Ribosome_recyc_fac_dom"/>
</dbReference>
<dbReference type="InterPro" id="IPR036191">
    <property type="entry name" value="RRF_sf"/>
</dbReference>
<dbReference type="NCBIfam" id="TIGR00496">
    <property type="entry name" value="frr"/>
    <property type="match status" value="1"/>
</dbReference>
<dbReference type="PANTHER" id="PTHR20982:SF3">
    <property type="entry name" value="MITOCHONDRIAL RIBOSOME RECYCLING FACTOR PSEUDO 1"/>
    <property type="match status" value="1"/>
</dbReference>
<dbReference type="PANTHER" id="PTHR20982">
    <property type="entry name" value="RIBOSOME RECYCLING FACTOR"/>
    <property type="match status" value="1"/>
</dbReference>
<dbReference type="Pfam" id="PF01765">
    <property type="entry name" value="RRF"/>
    <property type="match status" value="1"/>
</dbReference>
<dbReference type="SUPFAM" id="SSF55194">
    <property type="entry name" value="Ribosome recycling factor, RRF"/>
    <property type="match status" value="1"/>
</dbReference>
<proteinExistence type="inferred from homology"/>
<evidence type="ECO:0000255" key="1">
    <source>
        <dbReference type="HAMAP-Rule" id="MF_00040"/>
    </source>
</evidence>
<accession>Q5HAF9</accession>
<accession>Q5FDJ4</accession>
<reference key="1">
    <citation type="journal article" date="2005" name="Proc. Natl. Acad. Sci. U.S.A.">
        <title>The genome of the heartwater agent Ehrlichia ruminantium contains multiple tandem repeats of actively variable copy number.</title>
        <authorList>
            <person name="Collins N.E."/>
            <person name="Liebenberg J."/>
            <person name="de Villiers E.P."/>
            <person name="Brayton K.A."/>
            <person name="Louw E."/>
            <person name="Pretorius A."/>
            <person name="Faber F.E."/>
            <person name="van Heerden H."/>
            <person name="Josemans A."/>
            <person name="van Kleef M."/>
            <person name="Steyn H.C."/>
            <person name="van Strijp M.F."/>
            <person name="Zweygarth E."/>
            <person name="Jongejan F."/>
            <person name="Maillard J.C."/>
            <person name="Berthier D."/>
            <person name="Botha M."/>
            <person name="Joubert F."/>
            <person name="Corton C.H."/>
            <person name="Thomson N.R."/>
            <person name="Allsopp M.T."/>
            <person name="Allsopp B.A."/>
        </authorList>
    </citation>
    <scope>NUCLEOTIDE SEQUENCE [LARGE SCALE GENOMIC DNA]</scope>
    <source>
        <strain>Welgevonden</strain>
    </source>
</reference>
<reference key="2">
    <citation type="journal article" date="2006" name="J. Bacteriol.">
        <title>Comparative genomic analysis of three strains of Ehrlichia ruminantium reveals an active process of genome size plasticity.</title>
        <authorList>
            <person name="Frutos R."/>
            <person name="Viari A."/>
            <person name="Ferraz C."/>
            <person name="Morgat A."/>
            <person name="Eychenie S."/>
            <person name="Kandassamy Y."/>
            <person name="Chantal I."/>
            <person name="Bensaid A."/>
            <person name="Coissac E."/>
            <person name="Vachiery N."/>
            <person name="Demaille J."/>
            <person name="Martinez D."/>
        </authorList>
    </citation>
    <scope>NUCLEOTIDE SEQUENCE [LARGE SCALE GENOMIC DNA]</scope>
    <source>
        <strain>Welgevonden</strain>
    </source>
</reference>
<sequence>MINTIKQDAKNRMEKTLSVYLSDVDGIRTGRARASVLDGIVVETYGGRVKLNTISSISVSDNKTLLVKVWEINNVGAIKTAIINSNLGFGFSCEGAVIRLTVPDMTQDMRKNLVKLLGKISEDCRISIRNIRRDIMDKLKIMQDNKDISEDDLRIAGVEIQKITDEIIKKINDTFLAKEKELLHV</sequence>
<protein>
    <recommendedName>
        <fullName evidence="1">Ribosome-recycling factor</fullName>
        <shortName evidence="1">RRF</shortName>
    </recommendedName>
    <alternativeName>
        <fullName evidence="1">Ribosome-releasing factor</fullName>
    </alternativeName>
</protein>
<organism>
    <name type="scientific">Ehrlichia ruminantium (strain Welgevonden)</name>
    <dbReference type="NCBI Taxonomy" id="254945"/>
    <lineage>
        <taxon>Bacteria</taxon>
        <taxon>Pseudomonadati</taxon>
        <taxon>Pseudomonadota</taxon>
        <taxon>Alphaproteobacteria</taxon>
        <taxon>Rickettsiales</taxon>
        <taxon>Anaplasmataceae</taxon>
        <taxon>Ehrlichia</taxon>
    </lineage>
</organism>
<feature type="chain" id="PRO_0000167458" description="Ribosome-recycling factor">
    <location>
        <begin position="1"/>
        <end position="185"/>
    </location>
</feature>
<name>RRF_EHRRW</name>
<keyword id="KW-0963">Cytoplasm</keyword>
<keyword id="KW-0648">Protein biosynthesis</keyword>
<gene>
    <name evidence="1" type="primary">frr</name>
    <name type="ordered locus">Erum7230</name>
    <name type="ordered locus">ERWE_CDS_07610</name>
</gene>
<comment type="function">
    <text evidence="1">Responsible for the release of ribosomes from messenger RNA at the termination of protein biosynthesis. May increase the efficiency of translation by recycling ribosomes from one round of translation to another.</text>
</comment>
<comment type="subcellular location">
    <subcellularLocation>
        <location evidence="1">Cytoplasm</location>
    </subcellularLocation>
</comment>
<comment type="similarity">
    <text evidence="1">Belongs to the RRF family.</text>
</comment>